<protein>
    <recommendedName>
        <fullName>Ras-related protein Rab-3C</fullName>
        <ecNumber evidence="2">3.6.5.2</ecNumber>
    </recommendedName>
</protein>
<reference key="1">
    <citation type="submission" date="1995-11" db="EMBL/GenBank/DDBJ databases">
        <title>Rab3C is associated with N-type Ca channel in rat brain.</title>
        <authorList>
            <person name="Oho C."/>
            <person name="Nemoto Y."/>
            <person name="Omori A."/>
            <person name="Takahashi M."/>
        </authorList>
    </citation>
    <scope>NUCLEOTIDE SEQUENCE [MRNA]</scope>
    <source>
        <strain>Sprague-Dawley</strain>
        <tissue>Brain</tissue>
    </source>
</reference>
<reference key="2">
    <citation type="journal article" date="1996" name="Biochem. Biophys. Res. Commun.">
        <title>Cloning and tissue expression of the rat RAB 3C GTP-binding protein.</title>
        <authorList>
            <person name="Viggeswarapu M."/>
            <person name="Wildey G.M."/>
        </authorList>
    </citation>
    <scope>NUCLEOTIDE SEQUENCE [MRNA]</scope>
    <source>
        <tissue>Pheochromocytoma</tissue>
    </source>
</reference>
<reference key="3">
    <citation type="journal article" date="1996" name="J. Neurosci. Res.">
        <title>Differential expression of rab3 isoforms in oligodendrocytes and astrocytes.</title>
        <authorList>
            <person name="Madison D.L."/>
            <person name="Krueger W.H."/>
            <person name="Kim T."/>
            <person name="Pfeiffer S.E."/>
        </authorList>
    </citation>
    <scope>NUCLEOTIDE SEQUENCE [MRNA] OF 24-218</scope>
    <source>
        <tissue>Brain</tissue>
    </source>
</reference>
<reference key="4">
    <citation type="journal article" date="1997" name="Nature">
        <title>Rim is a putative Rab3 effector in regulating synaptic-vesicle fusion.</title>
        <authorList>
            <person name="Wang Y."/>
            <person name="Okamoto M."/>
            <person name="Schmitz F."/>
            <person name="Hofmann K."/>
            <person name="Suedhof T.C."/>
        </authorList>
    </citation>
    <scope>INTERACTION WITH RIMS1</scope>
</reference>
<dbReference type="EC" id="3.6.5.2" evidence="2"/>
<dbReference type="EMBL" id="D78197">
    <property type="protein sequence ID" value="BAA11302.1"/>
    <property type="molecule type" value="mRNA"/>
</dbReference>
<dbReference type="EMBL" id="U54807">
    <property type="protein sequence ID" value="AAC52879.1"/>
    <property type="molecule type" value="mRNA"/>
</dbReference>
<dbReference type="EMBL" id="U37099">
    <property type="protein sequence ID" value="AAC52704.1"/>
    <property type="molecule type" value="mRNA"/>
</dbReference>
<dbReference type="PIR" id="JC5066">
    <property type="entry name" value="JC5066"/>
</dbReference>
<dbReference type="RefSeq" id="NP_598220.2">
    <property type="nucleotide sequence ID" value="NM_133536.3"/>
</dbReference>
<dbReference type="RefSeq" id="XP_038957541.1">
    <property type="nucleotide sequence ID" value="XM_039101613.2"/>
</dbReference>
<dbReference type="SMR" id="P62824"/>
<dbReference type="BioGRID" id="251075">
    <property type="interactions" value="4"/>
</dbReference>
<dbReference type="FunCoup" id="P62824">
    <property type="interactions" value="1420"/>
</dbReference>
<dbReference type="IntAct" id="P62824">
    <property type="interactions" value="2"/>
</dbReference>
<dbReference type="MINT" id="P62824"/>
<dbReference type="STRING" id="10116.ENSRNOP00000015871"/>
<dbReference type="iPTMnet" id="P62824"/>
<dbReference type="PhosphoSitePlus" id="P62824"/>
<dbReference type="jPOST" id="P62824"/>
<dbReference type="PaxDb" id="10116-ENSRNOP00000015871"/>
<dbReference type="Ensembl" id="ENSRNOT00000116600.1">
    <property type="protein sequence ID" value="ENSRNOP00000096986.1"/>
    <property type="gene ID" value="ENSRNOG00000011623.7"/>
</dbReference>
<dbReference type="GeneID" id="171058"/>
<dbReference type="KEGG" id="rno:171058"/>
<dbReference type="AGR" id="RGD:620923"/>
<dbReference type="CTD" id="115827"/>
<dbReference type="RGD" id="620923">
    <property type="gene designation" value="Rab3c"/>
</dbReference>
<dbReference type="eggNOG" id="KOG0093">
    <property type="taxonomic scope" value="Eukaryota"/>
</dbReference>
<dbReference type="GeneTree" id="ENSGT00940000157368"/>
<dbReference type="HOGENOM" id="CLU_041217_10_1_1"/>
<dbReference type="InParanoid" id="P62824"/>
<dbReference type="OMA" id="FDMEDER"/>
<dbReference type="OrthoDB" id="9989112at2759"/>
<dbReference type="PhylomeDB" id="P62824"/>
<dbReference type="TreeFam" id="TF313199"/>
<dbReference type="Reactome" id="R-RNO-8873719">
    <property type="pathway name" value="RAB geranylgeranylation"/>
</dbReference>
<dbReference type="PRO" id="PR:P62824"/>
<dbReference type="Proteomes" id="UP000002494">
    <property type="component" value="Chromosome 2"/>
</dbReference>
<dbReference type="Bgee" id="ENSRNOG00000011623">
    <property type="expression patterns" value="Expressed in frontal cortex and 10 other cell types or tissues"/>
</dbReference>
<dbReference type="GO" id="GO:0005768">
    <property type="term" value="C:endosome"/>
    <property type="evidence" value="ECO:0000318"/>
    <property type="project" value="GO_Central"/>
</dbReference>
<dbReference type="GO" id="GO:0048471">
    <property type="term" value="C:perinuclear region of cytoplasm"/>
    <property type="evidence" value="ECO:0000266"/>
    <property type="project" value="RGD"/>
</dbReference>
<dbReference type="GO" id="GO:0005886">
    <property type="term" value="C:plasma membrane"/>
    <property type="evidence" value="ECO:0000318"/>
    <property type="project" value="GO_Central"/>
</dbReference>
<dbReference type="GO" id="GO:0008021">
    <property type="term" value="C:synaptic vesicle"/>
    <property type="evidence" value="ECO:0000266"/>
    <property type="project" value="RGD"/>
</dbReference>
<dbReference type="GO" id="GO:0030672">
    <property type="term" value="C:synaptic vesicle membrane"/>
    <property type="evidence" value="ECO:0000314"/>
    <property type="project" value="SynGO"/>
</dbReference>
<dbReference type="GO" id="GO:0031982">
    <property type="term" value="C:vesicle"/>
    <property type="evidence" value="ECO:0000266"/>
    <property type="project" value="RGD"/>
</dbReference>
<dbReference type="GO" id="GO:0005525">
    <property type="term" value="F:GTP binding"/>
    <property type="evidence" value="ECO:0007669"/>
    <property type="project" value="UniProtKB-KW"/>
</dbReference>
<dbReference type="GO" id="GO:0030742">
    <property type="term" value="F:GTP-dependent protein binding"/>
    <property type="evidence" value="ECO:0000266"/>
    <property type="project" value="RGD"/>
</dbReference>
<dbReference type="GO" id="GO:0003924">
    <property type="term" value="F:GTPase activity"/>
    <property type="evidence" value="ECO:0000266"/>
    <property type="project" value="RGD"/>
</dbReference>
<dbReference type="GO" id="GO:0031489">
    <property type="term" value="F:myosin V binding"/>
    <property type="evidence" value="ECO:0000266"/>
    <property type="project" value="RGD"/>
</dbReference>
<dbReference type="GO" id="GO:0019882">
    <property type="term" value="P:antigen processing and presentation"/>
    <property type="evidence" value="ECO:0000266"/>
    <property type="project" value="RGD"/>
</dbReference>
<dbReference type="GO" id="GO:0006887">
    <property type="term" value="P:exocytosis"/>
    <property type="evidence" value="ECO:0000318"/>
    <property type="project" value="GO_Central"/>
</dbReference>
<dbReference type="GO" id="GO:0015031">
    <property type="term" value="P:protein transport"/>
    <property type="evidence" value="ECO:0007669"/>
    <property type="project" value="UniProtKB-KW"/>
</dbReference>
<dbReference type="GO" id="GO:0017157">
    <property type="term" value="P:regulation of exocytosis"/>
    <property type="evidence" value="ECO:0000266"/>
    <property type="project" value="RGD"/>
</dbReference>
<dbReference type="CDD" id="cd01865">
    <property type="entry name" value="Rab3"/>
    <property type="match status" value="1"/>
</dbReference>
<dbReference type="FunFam" id="3.40.50.300:FF:000206">
    <property type="entry name" value="Ras-related protein Rab-3C"/>
    <property type="match status" value="1"/>
</dbReference>
<dbReference type="Gene3D" id="3.40.50.300">
    <property type="entry name" value="P-loop containing nucleotide triphosphate hydrolases"/>
    <property type="match status" value="1"/>
</dbReference>
<dbReference type="InterPro" id="IPR027417">
    <property type="entry name" value="P-loop_NTPase"/>
</dbReference>
<dbReference type="InterPro" id="IPR037872">
    <property type="entry name" value="Rab3"/>
</dbReference>
<dbReference type="InterPro" id="IPR005225">
    <property type="entry name" value="Small_GTP-bd"/>
</dbReference>
<dbReference type="InterPro" id="IPR001806">
    <property type="entry name" value="Small_GTPase"/>
</dbReference>
<dbReference type="InterPro" id="IPR050305">
    <property type="entry name" value="Small_GTPase_Rab"/>
</dbReference>
<dbReference type="NCBIfam" id="TIGR00231">
    <property type="entry name" value="small_GTP"/>
    <property type="match status" value="1"/>
</dbReference>
<dbReference type="PANTHER" id="PTHR47980">
    <property type="entry name" value="LD44762P"/>
    <property type="match status" value="1"/>
</dbReference>
<dbReference type="Pfam" id="PF00071">
    <property type="entry name" value="Ras"/>
    <property type="match status" value="1"/>
</dbReference>
<dbReference type="PRINTS" id="PR00449">
    <property type="entry name" value="RASTRNSFRMNG"/>
</dbReference>
<dbReference type="SMART" id="SM00175">
    <property type="entry name" value="RAB"/>
    <property type="match status" value="1"/>
</dbReference>
<dbReference type="SMART" id="SM00176">
    <property type="entry name" value="RAN"/>
    <property type="match status" value="1"/>
</dbReference>
<dbReference type="SMART" id="SM00173">
    <property type="entry name" value="RAS"/>
    <property type="match status" value="1"/>
</dbReference>
<dbReference type="SMART" id="SM00174">
    <property type="entry name" value="RHO"/>
    <property type="match status" value="1"/>
</dbReference>
<dbReference type="SUPFAM" id="SSF52540">
    <property type="entry name" value="P-loop containing nucleoside triphosphate hydrolases"/>
    <property type="match status" value="1"/>
</dbReference>
<dbReference type="PROSITE" id="PS51419">
    <property type="entry name" value="RAB"/>
    <property type="match status" value="1"/>
</dbReference>
<feature type="chain" id="PRO_0000121087" description="Ras-related protein Rab-3C">
    <location>
        <begin position="1"/>
        <end position="227"/>
    </location>
</feature>
<feature type="region of interest" description="Disordered" evidence="8">
    <location>
        <begin position="202"/>
        <end position="227"/>
    </location>
</feature>
<feature type="short sequence motif" description="Switch 1" evidence="2">
    <location>
        <begin position="53"/>
        <end position="66"/>
    </location>
</feature>
<feature type="short sequence motif" description="Switch 2" evidence="2">
    <location>
        <begin position="86"/>
        <end position="104"/>
    </location>
</feature>
<feature type="compositionally biased region" description="Pro residues" evidence="8">
    <location>
        <begin position="217"/>
        <end position="227"/>
    </location>
</feature>
<feature type="binding site" evidence="2">
    <location>
        <position position="39"/>
    </location>
    <ligand>
        <name>GTP</name>
        <dbReference type="ChEBI" id="CHEBI:37565"/>
    </ligand>
</feature>
<feature type="binding site" evidence="2">
    <location>
        <position position="42"/>
    </location>
    <ligand>
        <name>GTP</name>
        <dbReference type="ChEBI" id="CHEBI:37565"/>
    </ligand>
</feature>
<feature type="binding site" evidence="2">
    <location>
        <position position="43"/>
    </location>
    <ligand>
        <name>GTP</name>
        <dbReference type="ChEBI" id="CHEBI:37565"/>
    </ligand>
</feature>
<feature type="binding site" evidence="2">
    <location>
        <position position="44"/>
    </location>
    <ligand>
        <name>GTP</name>
        <dbReference type="ChEBI" id="CHEBI:37565"/>
    </ligand>
</feature>
<feature type="binding site" evidence="2">
    <location>
        <position position="44"/>
    </location>
    <ligand>
        <name>Mg(2+)</name>
        <dbReference type="ChEBI" id="CHEBI:18420"/>
    </ligand>
</feature>
<feature type="binding site" evidence="2">
    <location>
        <position position="45"/>
    </location>
    <ligand>
        <name>GTP</name>
        <dbReference type="ChEBI" id="CHEBI:37565"/>
    </ligand>
</feature>
<feature type="binding site" evidence="2">
    <location>
        <position position="56"/>
    </location>
    <ligand>
        <name>GTP</name>
        <dbReference type="ChEBI" id="CHEBI:37565"/>
    </ligand>
</feature>
<feature type="binding site" evidence="2">
    <location>
        <position position="57"/>
    </location>
    <ligand>
        <name>GTP</name>
        <dbReference type="ChEBI" id="CHEBI:37565"/>
    </ligand>
</feature>
<feature type="binding site" evidence="2">
    <location>
        <position position="61"/>
    </location>
    <ligand>
        <name>GTP</name>
        <dbReference type="ChEBI" id="CHEBI:37565"/>
    </ligand>
</feature>
<feature type="binding site" evidence="2">
    <location>
        <position position="62"/>
    </location>
    <ligand>
        <name>GTP</name>
        <dbReference type="ChEBI" id="CHEBI:37565"/>
    </ligand>
</feature>
<feature type="binding site" evidence="2">
    <location>
        <position position="62"/>
    </location>
    <ligand>
        <name>Mg(2+)</name>
        <dbReference type="ChEBI" id="CHEBI:18420"/>
    </ligand>
</feature>
<feature type="binding site" evidence="2">
    <location>
        <position position="85"/>
    </location>
    <ligand>
        <name>Mg(2+)</name>
        <dbReference type="ChEBI" id="CHEBI:18420"/>
    </ligand>
</feature>
<feature type="binding site" evidence="2">
    <location>
        <position position="88"/>
    </location>
    <ligand>
        <name>GTP</name>
        <dbReference type="ChEBI" id="CHEBI:37565"/>
    </ligand>
</feature>
<feature type="binding site" evidence="2">
    <location>
        <position position="143"/>
    </location>
    <ligand>
        <name>GTP</name>
        <dbReference type="ChEBI" id="CHEBI:37565"/>
    </ligand>
</feature>
<feature type="binding site" evidence="2">
    <location>
        <position position="144"/>
    </location>
    <ligand>
        <name>GTP</name>
        <dbReference type="ChEBI" id="CHEBI:37565"/>
    </ligand>
</feature>
<feature type="binding site" evidence="2">
    <location>
        <position position="146"/>
    </location>
    <ligand>
        <name>GTP</name>
        <dbReference type="ChEBI" id="CHEBI:37565"/>
    </ligand>
</feature>
<feature type="binding site" evidence="2">
    <location>
        <position position="174"/>
    </location>
    <ligand>
        <name>GTP</name>
        <dbReference type="ChEBI" id="CHEBI:37565"/>
    </ligand>
</feature>
<feature type="binding site" evidence="2">
    <location>
        <position position="175"/>
    </location>
    <ligand>
        <name>GTP</name>
        <dbReference type="ChEBI" id="CHEBI:37565"/>
    </ligand>
</feature>
<feature type="modified residue" description="Phosphothreonine" evidence="7">
    <location>
        <position position="86"/>
    </location>
</feature>
<feature type="modified residue" description="Phosphoserine" evidence="6">
    <location>
        <position position="196"/>
    </location>
</feature>
<feature type="modified residue" description="Phosphoserine" evidence="4">
    <location>
        <position position="198"/>
    </location>
</feature>
<feature type="modified residue" description="Phosphothreonine" evidence="5">
    <location>
        <position position="206"/>
    </location>
</feature>
<feature type="modified residue" description="Cysteine methyl ester" evidence="1">
    <location>
        <position position="227"/>
    </location>
</feature>
<feature type="lipid moiety-binding region" description="S-geranylgeranyl cysteine" evidence="1">
    <location>
        <position position="225"/>
    </location>
</feature>
<feature type="lipid moiety-binding region" description="S-geranylgeranyl cysteine" evidence="1">
    <location>
        <position position="227"/>
    </location>
</feature>
<feature type="sequence conflict" description="In Ref. 2; AAC52879." evidence="10" ref="2">
    <original>A</original>
    <variation>V</variation>
    <location>
        <position position="141"/>
    </location>
</feature>
<feature type="sequence conflict" description="In Ref. 2; AAC52879." evidence="10" ref="2">
    <original>QR</original>
    <variation>RH</variation>
    <location>
        <begin position="159"/>
        <end position="160"/>
    </location>
</feature>
<feature type="sequence conflict" description="In Ref. 2; AAC52879." evidence="10" ref="2">
    <original>A</original>
    <variation>G</variation>
    <location>
        <position position="207"/>
    </location>
</feature>
<organism>
    <name type="scientific">Rattus norvegicus</name>
    <name type="common">Rat</name>
    <dbReference type="NCBI Taxonomy" id="10116"/>
    <lineage>
        <taxon>Eukaryota</taxon>
        <taxon>Metazoa</taxon>
        <taxon>Chordata</taxon>
        <taxon>Craniata</taxon>
        <taxon>Vertebrata</taxon>
        <taxon>Euteleostomi</taxon>
        <taxon>Mammalia</taxon>
        <taxon>Eutheria</taxon>
        <taxon>Euarchontoglires</taxon>
        <taxon>Glires</taxon>
        <taxon>Rodentia</taxon>
        <taxon>Myomorpha</taxon>
        <taxon>Muroidea</taxon>
        <taxon>Muridae</taxon>
        <taxon>Murinae</taxon>
        <taxon>Rattus</taxon>
    </lineage>
</organism>
<keyword id="KW-1003">Cell membrane</keyword>
<keyword id="KW-0342">GTP-binding</keyword>
<keyword id="KW-0378">Hydrolase</keyword>
<keyword id="KW-0449">Lipoprotein</keyword>
<keyword id="KW-0460">Magnesium</keyword>
<keyword id="KW-0472">Membrane</keyword>
<keyword id="KW-0479">Metal-binding</keyword>
<keyword id="KW-0488">Methylation</keyword>
<keyword id="KW-0547">Nucleotide-binding</keyword>
<keyword id="KW-0597">Phosphoprotein</keyword>
<keyword id="KW-0636">Prenylation</keyword>
<keyword id="KW-0653">Protein transport</keyword>
<keyword id="KW-1185">Reference proteome</keyword>
<keyword id="KW-0813">Transport</keyword>
<accession>P62824</accession>
<accession>Q62858</accession>
<accession>Q62974</accession>
<accession>Q63482</accession>
<accession>Q9CXQ1</accession>
<evidence type="ECO:0000250" key="1"/>
<evidence type="ECO:0000250" key="2">
    <source>
        <dbReference type="UniProtKB" id="P10949"/>
    </source>
</evidence>
<evidence type="ECO:0000250" key="3">
    <source>
        <dbReference type="UniProtKB" id="P20336"/>
    </source>
</evidence>
<evidence type="ECO:0000250" key="4">
    <source>
        <dbReference type="UniProtKB" id="P20337"/>
    </source>
</evidence>
<evidence type="ECO:0000250" key="5">
    <source>
        <dbReference type="UniProtKB" id="P62823"/>
    </source>
</evidence>
<evidence type="ECO:0000250" key="6">
    <source>
        <dbReference type="UniProtKB" id="Q63941"/>
    </source>
</evidence>
<evidence type="ECO:0000250" key="7">
    <source>
        <dbReference type="UniProtKB" id="Q96E17"/>
    </source>
</evidence>
<evidence type="ECO:0000256" key="8">
    <source>
        <dbReference type="SAM" id="MobiDB-lite"/>
    </source>
</evidence>
<evidence type="ECO:0000269" key="9">
    <source>
    </source>
</evidence>
<evidence type="ECO:0000305" key="10"/>
<evidence type="ECO:0000312" key="11">
    <source>
        <dbReference type="RGD" id="620923"/>
    </source>
</evidence>
<proteinExistence type="evidence at protein level"/>
<gene>
    <name evidence="11" type="primary">Rab3c</name>
</gene>
<name>RAB3C_RAT</name>
<sequence length="227" mass="25872">MRHEAPMQMASAQDARFGQKDSSDQNFDYMFKLLIIGNSSVGKTSFLFRYADDSFTSAFVSTVGIDFKVKTVFKNEKRIKLQIWDTAGQERYRTITTAYYRGAMGFILMYDITNEESFNAVQDWSTQIKTYSWDNAQVILAGNKCDMEDERVVSTERGQRLGEQLGFEFFETSAKDNINVKQTFERLVDIICDKMSESLETDPAITAAKQSTRLKETPPPPQPNCGC</sequence>
<comment type="function">
    <text evidence="2">The small GTPases Rab are key regulators of intracellular membrane trafficking, from the formation of transport vesicles to their fusion with membranes. Rabs cycle between an inactive GDP-bound form and an active GTP-bound form that is able to recruit to membranes different sets of downstream effectors directly responsible for vesicle formation, movement, tethering and fusion.</text>
</comment>
<comment type="catalytic activity">
    <reaction evidence="2">
        <text>GTP + H2O = GDP + phosphate + H(+)</text>
        <dbReference type="Rhea" id="RHEA:19669"/>
        <dbReference type="ChEBI" id="CHEBI:15377"/>
        <dbReference type="ChEBI" id="CHEBI:15378"/>
        <dbReference type="ChEBI" id="CHEBI:37565"/>
        <dbReference type="ChEBI" id="CHEBI:43474"/>
        <dbReference type="ChEBI" id="CHEBI:58189"/>
        <dbReference type="EC" id="3.6.5.2"/>
    </reaction>
    <physiologicalReaction direction="left-to-right" evidence="2">
        <dbReference type="Rhea" id="RHEA:19670"/>
    </physiologicalReaction>
</comment>
<comment type="cofactor">
    <cofactor evidence="2">
        <name>Mg(2+)</name>
        <dbReference type="ChEBI" id="CHEBI:18420"/>
    </cofactor>
</comment>
<comment type="activity regulation">
    <text evidence="3">Regulated by guanine nucleotide exchange factors (GEFs) which promote the exchange of bound GDP for free GTP. Regulated by GTPase activating proteins (GAPs) which increase the GTP hydrolysis activity. Inhibited by GDP dissociation inhibitors (GDIs) which prevent Rab-GDP dissociation.</text>
</comment>
<comment type="subunit">
    <text evidence="5 7 9">Interacts with RIMS2, RPH3A and RPH3AL (By similarity). Interacts with RIMS1 (PubMed:9252191). Interacts with GDI2 and CHM; phosphorylation at Thr-86 disrupts these interactions (By similarity). Interacts with MADD (via uDENN domain); the GTP-bound form is preferred for interaction (By similarity).</text>
</comment>
<comment type="subcellular location">
    <subcellularLocation>
        <location evidence="10">Cell membrane</location>
        <topology evidence="10">Lipid-anchor</topology>
        <orientation evidence="10">Cytoplasmic side</orientation>
    </subcellularLocation>
</comment>
<comment type="domain">
    <text evidence="2">Switch 1, switch 2 and the interswitch regions are characteristic of Rab GTPases and mediate the interactions with Rab downstream effectors. The switch regions undergo conformational changes upon nucleotide binding which drives interaction with specific sets of effector proteins, with most effectors only binding to GTP-bound Rab.</text>
</comment>
<comment type="PTM">
    <text evidence="7">Phosphorylation of Thr-86 in the switch II region by LRRK2 prevents the association of RAB regulatory proteins, including CHM and RAB GDP dissociation inhibitor GDI2.</text>
</comment>
<comment type="similarity">
    <text evidence="10">Belongs to the small GTPase superfamily. Rab family.</text>
</comment>